<accession>A2BWN6</accession>
<evidence type="ECO:0000255" key="1">
    <source>
        <dbReference type="HAMAP-Rule" id="MF_00315"/>
    </source>
</evidence>
<organism>
    <name type="scientific">Prochlorococcus marinus (strain MIT 9515)</name>
    <dbReference type="NCBI Taxonomy" id="167542"/>
    <lineage>
        <taxon>Bacteria</taxon>
        <taxon>Bacillati</taxon>
        <taxon>Cyanobacteriota</taxon>
        <taxon>Cyanophyceae</taxon>
        <taxon>Synechococcales</taxon>
        <taxon>Prochlorococcaceae</taxon>
        <taxon>Prochlorococcus</taxon>
    </lineage>
</organism>
<protein>
    <recommendedName>
        <fullName evidence="1">1-deoxy-D-xylulose-5-phosphate synthase</fullName>
        <ecNumber evidence="1">2.2.1.7</ecNumber>
    </recommendedName>
    <alternativeName>
        <fullName evidence="1">1-deoxyxylulose-5-phosphate synthase</fullName>
        <shortName evidence="1">DXP synthase</shortName>
        <shortName evidence="1">DXPS</shortName>
    </alternativeName>
</protein>
<name>DXS_PROM5</name>
<reference key="1">
    <citation type="journal article" date="2007" name="PLoS Genet.">
        <title>Patterns and implications of gene gain and loss in the evolution of Prochlorococcus.</title>
        <authorList>
            <person name="Kettler G.C."/>
            <person name="Martiny A.C."/>
            <person name="Huang K."/>
            <person name="Zucker J."/>
            <person name="Coleman M.L."/>
            <person name="Rodrigue S."/>
            <person name="Chen F."/>
            <person name="Lapidus A."/>
            <person name="Ferriera S."/>
            <person name="Johnson J."/>
            <person name="Steglich C."/>
            <person name="Church G.M."/>
            <person name="Richardson P."/>
            <person name="Chisholm S.W."/>
        </authorList>
    </citation>
    <scope>NUCLEOTIDE SEQUENCE [LARGE SCALE GENOMIC DNA]</scope>
    <source>
        <strain>MIT 9515</strain>
    </source>
</reference>
<gene>
    <name evidence="1" type="primary">dxs</name>
    <name type="ordered locus">P9515_09901</name>
</gene>
<sequence length="631" mass="68276">MLLSELSHPNQLHGLTVSQLEEIACQIRERHLQVVSTSGGHLGPGLGVVELTLALYQTLDLDFDKVVWDVGHQAYPHKLVTGRFNEFDSLRQQKGIAGYLKRSESIFDHFGAGHASTSISAALGMAIARDAKGENHKCVAVIGDGALTGGMALEAINHAGTLPETPFLVILNDNDMSISPPVGALSTYLNKVRLSPPLQFLSNSVQESVKNIPLIGKDLPEELKTIKGSVRRLAVPKVGAVFEELGFTYMGPIQGHDISNLINTFNAAHRLKKPVLVHVVTTKGKGYPYAEADQVGYHAQSSFNLTTGKSIPSSKPKPVSYSKIFGQTLLKICEQDSKVIGITAAMATGTGLDLLQKNIPEQYIDVGIAEQHAVTLAAGMSCDGLKPVVAIYSTFLQRAFDQLIHDVGIQNLPVSFVLDRAGIVGADGPTHQGQYDISYMRSIPNFVLMAPKDEAELQRMLITSINHKGPTALRIPRGSGRGVAVMDEGWEPLNIGEGEILEDGEDILIVAYGSMVSSAIETSKLLKDKNISPCVINARFVRPLDKDLILPLANKIKKVVTMEEGTLIGGFGSAIVELLNDNDINIPVFRIGIPDVLVDHASPDQSKTQLGLMPNQMSENIINRFNLIKNF</sequence>
<dbReference type="EC" id="2.2.1.7" evidence="1"/>
<dbReference type="EMBL" id="CP000552">
    <property type="protein sequence ID" value="ABM72197.1"/>
    <property type="molecule type" value="Genomic_DNA"/>
</dbReference>
<dbReference type="RefSeq" id="WP_011820299.1">
    <property type="nucleotide sequence ID" value="NC_008817.1"/>
</dbReference>
<dbReference type="SMR" id="A2BWN6"/>
<dbReference type="STRING" id="167542.P9515_09901"/>
<dbReference type="GeneID" id="60201593"/>
<dbReference type="KEGG" id="pmc:P9515_09901"/>
<dbReference type="eggNOG" id="COG1154">
    <property type="taxonomic scope" value="Bacteria"/>
</dbReference>
<dbReference type="HOGENOM" id="CLU_009227_1_4_3"/>
<dbReference type="OrthoDB" id="9803371at2"/>
<dbReference type="UniPathway" id="UPA00064">
    <property type="reaction ID" value="UER00091"/>
</dbReference>
<dbReference type="Proteomes" id="UP000001589">
    <property type="component" value="Chromosome"/>
</dbReference>
<dbReference type="GO" id="GO:0005829">
    <property type="term" value="C:cytosol"/>
    <property type="evidence" value="ECO:0007669"/>
    <property type="project" value="TreeGrafter"/>
</dbReference>
<dbReference type="GO" id="GO:0008661">
    <property type="term" value="F:1-deoxy-D-xylulose-5-phosphate synthase activity"/>
    <property type="evidence" value="ECO:0007669"/>
    <property type="project" value="UniProtKB-UniRule"/>
</dbReference>
<dbReference type="GO" id="GO:0000287">
    <property type="term" value="F:magnesium ion binding"/>
    <property type="evidence" value="ECO:0007669"/>
    <property type="project" value="UniProtKB-UniRule"/>
</dbReference>
<dbReference type="GO" id="GO:0030976">
    <property type="term" value="F:thiamine pyrophosphate binding"/>
    <property type="evidence" value="ECO:0007669"/>
    <property type="project" value="UniProtKB-UniRule"/>
</dbReference>
<dbReference type="GO" id="GO:0052865">
    <property type="term" value="P:1-deoxy-D-xylulose 5-phosphate biosynthetic process"/>
    <property type="evidence" value="ECO:0007669"/>
    <property type="project" value="UniProtKB-UniPathway"/>
</dbReference>
<dbReference type="GO" id="GO:0019288">
    <property type="term" value="P:isopentenyl diphosphate biosynthetic process, methylerythritol 4-phosphate pathway"/>
    <property type="evidence" value="ECO:0007669"/>
    <property type="project" value="TreeGrafter"/>
</dbReference>
<dbReference type="GO" id="GO:0016114">
    <property type="term" value="P:terpenoid biosynthetic process"/>
    <property type="evidence" value="ECO:0007669"/>
    <property type="project" value="UniProtKB-UniRule"/>
</dbReference>
<dbReference type="GO" id="GO:0009228">
    <property type="term" value="P:thiamine biosynthetic process"/>
    <property type="evidence" value="ECO:0007669"/>
    <property type="project" value="UniProtKB-UniRule"/>
</dbReference>
<dbReference type="CDD" id="cd02007">
    <property type="entry name" value="TPP_DXS"/>
    <property type="match status" value="1"/>
</dbReference>
<dbReference type="CDD" id="cd07033">
    <property type="entry name" value="TPP_PYR_DXS_TK_like"/>
    <property type="match status" value="1"/>
</dbReference>
<dbReference type="FunFam" id="3.40.50.920:FF:000002">
    <property type="entry name" value="1-deoxy-D-xylulose-5-phosphate synthase"/>
    <property type="match status" value="1"/>
</dbReference>
<dbReference type="FunFam" id="3.40.50.970:FF:000005">
    <property type="entry name" value="1-deoxy-D-xylulose-5-phosphate synthase"/>
    <property type="match status" value="1"/>
</dbReference>
<dbReference type="Gene3D" id="3.40.50.920">
    <property type="match status" value="1"/>
</dbReference>
<dbReference type="Gene3D" id="3.40.50.970">
    <property type="match status" value="2"/>
</dbReference>
<dbReference type="HAMAP" id="MF_00315">
    <property type="entry name" value="DXP_synth"/>
    <property type="match status" value="1"/>
</dbReference>
<dbReference type="InterPro" id="IPR005477">
    <property type="entry name" value="Dxylulose-5-P_synthase"/>
</dbReference>
<dbReference type="InterPro" id="IPR029061">
    <property type="entry name" value="THDP-binding"/>
</dbReference>
<dbReference type="InterPro" id="IPR009014">
    <property type="entry name" value="Transketo_C/PFOR_II"/>
</dbReference>
<dbReference type="InterPro" id="IPR005475">
    <property type="entry name" value="Transketolase-like_Pyr-bd"/>
</dbReference>
<dbReference type="InterPro" id="IPR020826">
    <property type="entry name" value="Transketolase_BS"/>
</dbReference>
<dbReference type="InterPro" id="IPR033248">
    <property type="entry name" value="Transketolase_C"/>
</dbReference>
<dbReference type="InterPro" id="IPR049557">
    <property type="entry name" value="Transketolase_CS"/>
</dbReference>
<dbReference type="NCBIfam" id="TIGR00204">
    <property type="entry name" value="dxs"/>
    <property type="match status" value="1"/>
</dbReference>
<dbReference type="NCBIfam" id="NF003933">
    <property type="entry name" value="PRK05444.2-2"/>
    <property type="match status" value="1"/>
</dbReference>
<dbReference type="PANTHER" id="PTHR43322">
    <property type="entry name" value="1-D-DEOXYXYLULOSE 5-PHOSPHATE SYNTHASE-RELATED"/>
    <property type="match status" value="1"/>
</dbReference>
<dbReference type="PANTHER" id="PTHR43322:SF5">
    <property type="entry name" value="1-DEOXY-D-XYLULOSE-5-PHOSPHATE SYNTHASE, CHLOROPLASTIC"/>
    <property type="match status" value="1"/>
</dbReference>
<dbReference type="Pfam" id="PF13292">
    <property type="entry name" value="DXP_synthase_N"/>
    <property type="match status" value="1"/>
</dbReference>
<dbReference type="Pfam" id="PF02779">
    <property type="entry name" value="Transket_pyr"/>
    <property type="match status" value="1"/>
</dbReference>
<dbReference type="Pfam" id="PF02780">
    <property type="entry name" value="Transketolase_C"/>
    <property type="match status" value="1"/>
</dbReference>
<dbReference type="SMART" id="SM00861">
    <property type="entry name" value="Transket_pyr"/>
    <property type="match status" value="1"/>
</dbReference>
<dbReference type="SUPFAM" id="SSF52518">
    <property type="entry name" value="Thiamin diphosphate-binding fold (THDP-binding)"/>
    <property type="match status" value="2"/>
</dbReference>
<dbReference type="SUPFAM" id="SSF52922">
    <property type="entry name" value="TK C-terminal domain-like"/>
    <property type="match status" value="1"/>
</dbReference>
<dbReference type="PROSITE" id="PS00801">
    <property type="entry name" value="TRANSKETOLASE_1"/>
    <property type="match status" value="1"/>
</dbReference>
<dbReference type="PROSITE" id="PS00802">
    <property type="entry name" value="TRANSKETOLASE_2"/>
    <property type="match status" value="1"/>
</dbReference>
<comment type="function">
    <text evidence="1">Catalyzes the acyloin condensation reaction between C atoms 2 and 3 of pyruvate and glyceraldehyde 3-phosphate to yield 1-deoxy-D-xylulose-5-phosphate (DXP).</text>
</comment>
<comment type="catalytic activity">
    <reaction evidence="1">
        <text>D-glyceraldehyde 3-phosphate + pyruvate + H(+) = 1-deoxy-D-xylulose 5-phosphate + CO2</text>
        <dbReference type="Rhea" id="RHEA:12605"/>
        <dbReference type="ChEBI" id="CHEBI:15361"/>
        <dbReference type="ChEBI" id="CHEBI:15378"/>
        <dbReference type="ChEBI" id="CHEBI:16526"/>
        <dbReference type="ChEBI" id="CHEBI:57792"/>
        <dbReference type="ChEBI" id="CHEBI:59776"/>
        <dbReference type="EC" id="2.2.1.7"/>
    </reaction>
</comment>
<comment type="cofactor">
    <cofactor evidence="1">
        <name>Mg(2+)</name>
        <dbReference type="ChEBI" id="CHEBI:18420"/>
    </cofactor>
    <text evidence="1">Binds 1 Mg(2+) ion per subunit.</text>
</comment>
<comment type="cofactor">
    <cofactor evidence="1">
        <name>thiamine diphosphate</name>
        <dbReference type="ChEBI" id="CHEBI:58937"/>
    </cofactor>
    <text evidence="1">Binds 1 thiamine pyrophosphate per subunit.</text>
</comment>
<comment type="pathway">
    <text evidence="1">Metabolic intermediate biosynthesis; 1-deoxy-D-xylulose 5-phosphate biosynthesis; 1-deoxy-D-xylulose 5-phosphate from D-glyceraldehyde 3-phosphate and pyruvate: step 1/1.</text>
</comment>
<comment type="subunit">
    <text evidence="1">Homodimer.</text>
</comment>
<comment type="similarity">
    <text evidence="1">Belongs to the transketolase family. DXPS subfamily.</text>
</comment>
<feature type="chain" id="PRO_1000019058" description="1-deoxy-D-xylulose-5-phosphate synthase">
    <location>
        <begin position="1"/>
        <end position="631"/>
    </location>
</feature>
<feature type="binding site" evidence="1">
    <location>
        <position position="72"/>
    </location>
    <ligand>
        <name>thiamine diphosphate</name>
        <dbReference type="ChEBI" id="CHEBI:58937"/>
    </ligand>
</feature>
<feature type="binding site" evidence="1">
    <location>
        <begin position="113"/>
        <end position="115"/>
    </location>
    <ligand>
        <name>thiamine diphosphate</name>
        <dbReference type="ChEBI" id="CHEBI:58937"/>
    </ligand>
</feature>
<feature type="binding site" evidence="1">
    <location>
        <position position="144"/>
    </location>
    <ligand>
        <name>Mg(2+)</name>
        <dbReference type="ChEBI" id="CHEBI:18420"/>
    </ligand>
</feature>
<feature type="binding site" evidence="1">
    <location>
        <begin position="145"/>
        <end position="146"/>
    </location>
    <ligand>
        <name>thiamine diphosphate</name>
        <dbReference type="ChEBI" id="CHEBI:58937"/>
    </ligand>
</feature>
<feature type="binding site" evidence="1">
    <location>
        <position position="174"/>
    </location>
    <ligand>
        <name>Mg(2+)</name>
        <dbReference type="ChEBI" id="CHEBI:18420"/>
    </ligand>
</feature>
<feature type="binding site" evidence="1">
    <location>
        <position position="174"/>
    </location>
    <ligand>
        <name>thiamine diphosphate</name>
        <dbReference type="ChEBI" id="CHEBI:58937"/>
    </ligand>
</feature>
<feature type="binding site" evidence="1">
    <location>
        <position position="287"/>
    </location>
    <ligand>
        <name>thiamine diphosphate</name>
        <dbReference type="ChEBI" id="CHEBI:58937"/>
    </ligand>
</feature>
<feature type="binding site" evidence="1">
    <location>
        <position position="370"/>
    </location>
    <ligand>
        <name>thiamine diphosphate</name>
        <dbReference type="ChEBI" id="CHEBI:58937"/>
    </ligand>
</feature>
<proteinExistence type="inferred from homology"/>
<keyword id="KW-0414">Isoprene biosynthesis</keyword>
<keyword id="KW-0460">Magnesium</keyword>
<keyword id="KW-0479">Metal-binding</keyword>
<keyword id="KW-0784">Thiamine biosynthesis</keyword>
<keyword id="KW-0786">Thiamine pyrophosphate</keyword>
<keyword id="KW-0808">Transferase</keyword>